<sequence>MRHRKSGRHLSRTSSHRKAMFQNMAVSLIEHELIKTTLPKAKELRRVAEPLITLAKEDSVANRRLAFDRTRSKSAVGKLFNDLGKRYATRQGGYLRILKCGFRAGDNAPMAYVELVDRPVGGAVEAAE</sequence>
<protein>
    <recommendedName>
        <fullName evidence="1">Large ribosomal subunit protein bL17</fullName>
    </recommendedName>
    <alternativeName>
        <fullName evidence="2">50S ribosomal protein L17</fullName>
    </alternativeName>
</protein>
<name>RL17_PSEPW</name>
<comment type="subunit">
    <text evidence="1">Part of the 50S ribosomal subunit. Contacts protein L32.</text>
</comment>
<comment type="similarity">
    <text evidence="1">Belongs to the bacterial ribosomal protein bL17 family.</text>
</comment>
<reference key="1">
    <citation type="submission" date="2008-02" db="EMBL/GenBank/DDBJ databases">
        <title>Complete sequence of Pseudomonas putida W619.</title>
        <authorList>
            <person name="Copeland A."/>
            <person name="Lucas S."/>
            <person name="Lapidus A."/>
            <person name="Barry K."/>
            <person name="Detter J.C."/>
            <person name="Glavina del Rio T."/>
            <person name="Dalin E."/>
            <person name="Tice H."/>
            <person name="Pitluck S."/>
            <person name="Chain P."/>
            <person name="Malfatti S."/>
            <person name="Shin M."/>
            <person name="Vergez L."/>
            <person name="Schmutz J."/>
            <person name="Larimer F."/>
            <person name="Land M."/>
            <person name="Hauser L."/>
            <person name="Kyrpides N."/>
            <person name="Kim E."/>
            <person name="Taghavi S."/>
            <person name="Vangronsveld D."/>
            <person name="van der Lelie D."/>
            <person name="Richardson P."/>
        </authorList>
    </citation>
    <scope>NUCLEOTIDE SEQUENCE [LARGE SCALE GENOMIC DNA]</scope>
    <source>
        <strain>W619</strain>
    </source>
</reference>
<gene>
    <name evidence="1" type="primary">rplQ</name>
    <name type="ordered locus">PputW619_4723</name>
</gene>
<organism>
    <name type="scientific">Pseudomonas putida (strain W619)</name>
    <dbReference type="NCBI Taxonomy" id="390235"/>
    <lineage>
        <taxon>Bacteria</taxon>
        <taxon>Pseudomonadati</taxon>
        <taxon>Pseudomonadota</taxon>
        <taxon>Gammaproteobacteria</taxon>
        <taxon>Pseudomonadales</taxon>
        <taxon>Pseudomonadaceae</taxon>
        <taxon>Pseudomonas</taxon>
    </lineage>
</organism>
<feature type="chain" id="PRO_1000144469" description="Large ribosomal subunit protein bL17">
    <location>
        <begin position="1"/>
        <end position="128"/>
    </location>
</feature>
<dbReference type="EMBL" id="CP000949">
    <property type="protein sequence ID" value="ACA75199.1"/>
    <property type="molecule type" value="Genomic_DNA"/>
</dbReference>
<dbReference type="SMR" id="B1JAI6"/>
<dbReference type="STRING" id="390235.PputW619_4723"/>
<dbReference type="KEGG" id="ppw:PputW619_4723"/>
<dbReference type="eggNOG" id="COG0203">
    <property type="taxonomic scope" value="Bacteria"/>
</dbReference>
<dbReference type="HOGENOM" id="CLU_074407_2_0_6"/>
<dbReference type="OrthoDB" id="9809073at2"/>
<dbReference type="GO" id="GO:0022625">
    <property type="term" value="C:cytosolic large ribosomal subunit"/>
    <property type="evidence" value="ECO:0007669"/>
    <property type="project" value="TreeGrafter"/>
</dbReference>
<dbReference type="GO" id="GO:0003735">
    <property type="term" value="F:structural constituent of ribosome"/>
    <property type="evidence" value="ECO:0007669"/>
    <property type="project" value="InterPro"/>
</dbReference>
<dbReference type="GO" id="GO:0006412">
    <property type="term" value="P:translation"/>
    <property type="evidence" value="ECO:0007669"/>
    <property type="project" value="UniProtKB-UniRule"/>
</dbReference>
<dbReference type="FunFam" id="3.90.1030.10:FF:000001">
    <property type="entry name" value="50S ribosomal protein L17"/>
    <property type="match status" value="1"/>
</dbReference>
<dbReference type="Gene3D" id="3.90.1030.10">
    <property type="entry name" value="Ribosomal protein L17"/>
    <property type="match status" value="1"/>
</dbReference>
<dbReference type="HAMAP" id="MF_01368">
    <property type="entry name" value="Ribosomal_bL17"/>
    <property type="match status" value="1"/>
</dbReference>
<dbReference type="InterPro" id="IPR000456">
    <property type="entry name" value="Ribosomal_bL17"/>
</dbReference>
<dbReference type="InterPro" id="IPR047859">
    <property type="entry name" value="Ribosomal_bL17_CS"/>
</dbReference>
<dbReference type="InterPro" id="IPR036373">
    <property type="entry name" value="Ribosomal_bL17_sf"/>
</dbReference>
<dbReference type="NCBIfam" id="TIGR00059">
    <property type="entry name" value="L17"/>
    <property type="match status" value="1"/>
</dbReference>
<dbReference type="PANTHER" id="PTHR14413:SF16">
    <property type="entry name" value="LARGE RIBOSOMAL SUBUNIT PROTEIN BL17M"/>
    <property type="match status" value="1"/>
</dbReference>
<dbReference type="PANTHER" id="PTHR14413">
    <property type="entry name" value="RIBOSOMAL PROTEIN L17"/>
    <property type="match status" value="1"/>
</dbReference>
<dbReference type="Pfam" id="PF01196">
    <property type="entry name" value="Ribosomal_L17"/>
    <property type="match status" value="1"/>
</dbReference>
<dbReference type="SUPFAM" id="SSF64263">
    <property type="entry name" value="Prokaryotic ribosomal protein L17"/>
    <property type="match status" value="1"/>
</dbReference>
<dbReference type="PROSITE" id="PS01167">
    <property type="entry name" value="RIBOSOMAL_L17"/>
    <property type="match status" value="1"/>
</dbReference>
<evidence type="ECO:0000255" key="1">
    <source>
        <dbReference type="HAMAP-Rule" id="MF_01368"/>
    </source>
</evidence>
<evidence type="ECO:0000305" key="2"/>
<keyword id="KW-0687">Ribonucleoprotein</keyword>
<keyword id="KW-0689">Ribosomal protein</keyword>
<accession>B1JAI6</accession>
<proteinExistence type="inferred from homology"/>